<comment type="function">
    <text evidence="1">Catalyzes the conversion of pyruvate to formate and acetyl-CoA.</text>
</comment>
<comment type="catalytic activity">
    <reaction evidence="1">
        <text>formate + acetyl-CoA = pyruvate + CoA</text>
        <dbReference type="Rhea" id="RHEA:11844"/>
        <dbReference type="ChEBI" id="CHEBI:15361"/>
        <dbReference type="ChEBI" id="CHEBI:15740"/>
        <dbReference type="ChEBI" id="CHEBI:57287"/>
        <dbReference type="ChEBI" id="CHEBI:57288"/>
        <dbReference type="EC" id="2.3.1.54"/>
    </reaction>
</comment>
<comment type="pathway">
    <text>Fermentation; pyruvate fermentation; formate from pyruvate: step 1/1.</text>
</comment>
<comment type="subunit">
    <text evidence="1">Homodimer.</text>
</comment>
<comment type="subcellular location">
    <subcellularLocation>
        <location evidence="2">Cytoplasm</location>
    </subcellularLocation>
</comment>
<comment type="miscellaneous">
    <text evidence="1">Several mechanisms have been proposed based on complexes formed with substrate analogs. After activation by the glycine radical, the cysteine radical, Cys-414, can abstract hydrogen atoms from the other active site cysteine, Cys-413, and from coenzyme A, and it can also transfer hydrogen atoms to product radicals. The other active site cysteine can attack the central carbonyl of pyruvate and covalently bind the product acetyl group.</text>
</comment>
<comment type="similarity">
    <text evidence="5">Belongs to the glycyl radical enzyme (GRE) family. PFL subfamily.</text>
</comment>
<evidence type="ECO:0000250" key="1">
    <source>
        <dbReference type="UniProtKB" id="P09373"/>
    </source>
</evidence>
<evidence type="ECO:0000250" key="2">
    <source>
        <dbReference type="UniProtKB" id="Q5HJF4"/>
    </source>
</evidence>
<evidence type="ECO:0000255" key="3">
    <source>
        <dbReference type="PROSITE-ProRule" id="PRU00493"/>
    </source>
</evidence>
<evidence type="ECO:0000255" key="4">
    <source>
        <dbReference type="PROSITE-ProRule" id="PRU00887"/>
    </source>
</evidence>
<evidence type="ECO:0000305" key="5"/>
<proteinExistence type="evidence at protein level"/>
<dbReference type="EC" id="2.3.1.54" evidence="1"/>
<dbReference type="EMBL" id="BA000018">
    <property type="protein sequence ID" value="BAB41440.1"/>
    <property type="molecule type" value="Genomic_DNA"/>
</dbReference>
<dbReference type="PIR" id="E89785">
    <property type="entry name" value="E89785"/>
</dbReference>
<dbReference type="RefSeq" id="WP_000894660.1">
    <property type="nucleotide sequence ID" value="NC_002745.2"/>
</dbReference>
<dbReference type="SMR" id="Q7A7X6"/>
<dbReference type="EnsemblBacteria" id="BAB41440">
    <property type="protein sequence ID" value="BAB41440"/>
    <property type="gene ID" value="BAB41440"/>
</dbReference>
<dbReference type="KEGG" id="sau:SA0218"/>
<dbReference type="HOGENOM" id="CLU_023898_0_0_9"/>
<dbReference type="UniPathway" id="UPA00920">
    <property type="reaction ID" value="UER00891"/>
</dbReference>
<dbReference type="GO" id="GO:0005829">
    <property type="term" value="C:cytosol"/>
    <property type="evidence" value="ECO:0007669"/>
    <property type="project" value="TreeGrafter"/>
</dbReference>
<dbReference type="GO" id="GO:0008861">
    <property type="term" value="F:formate C-acetyltransferase activity"/>
    <property type="evidence" value="ECO:0007669"/>
    <property type="project" value="UniProtKB-EC"/>
</dbReference>
<dbReference type="GO" id="GO:0006006">
    <property type="term" value="P:glucose metabolic process"/>
    <property type="evidence" value="ECO:0007669"/>
    <property type="project" value="UniProtKB-KW"/>
</dbReference>
<dbReference type="CDD" id="cd01678">
    <property type="entry name" value="PFL1"/>
    <property type="match status" value="1"/>
</dbReference>
<dbReference type="FunFam" id="3.20.70.20:FF:000003">
    <property type="entry name" value="Formate acetyltransferase"/>
    <property type="match status" value="1"/>
</dbReference>
<dbReference type="Gene3D" id="3.20.70.20">
    <property type="match status" value="1"/>
</dbReference>
<dbReference type="InterPro" id="IPR050244">
    <property type="entry name" value="Auton_GlycylRad_Cofactor"/>
</dbReference>
<dbReference type="InterPro" id="IPR005949">
    <property type="entry name" value="Form_AcTrfase"/>
</dbReference>
<dbReference type="InterPro" id="IPR019777">
    <property type="entry name" value="Form_AcTrfase_GR_CS"/>
</dbReference>
<dbReference type="InterPro" id="IPR001150">
    <property type="entry name" value="Gly_radical"/>
</dbReference>
<dbReference type="InterPro" id="IPR004184">
    <property type="entry name" value="PFL_dom"/>
</dbReference>
<dbReference type="NCBIfam" id="TIGR01255">
    <property type="entry name" value="pyr_form_ly_1"/>
    <property type="match status" value="1"/>
</dbReference>
<dbReference type="PANTHER" id="PTHR30191">
    <property type="entry name" value="FORMATE ACETYLTRANSFERASE"/>
    <property type="match status" value="1"/>
</dbReference>
<dbReference type="PANTHER" id="PTHR30191:SF0">
    <property type="entry name" value="FORMATE ACETYLTRANSFERASE 1"/>
    <property type="match status" value="1"/>
</dbReference>
<dbReference type="Pfam" id="PF01228">
    <property type="entry name" value="Gly_radical"/>
    <property type="match status" value="1"/>
</dbReference>
<dbReference type="Pfam" id="PF02901">
    <property type="entry name" value="PFL-like"/>
    <property type="match status" value="1"/>
</dbReference>
<dbReference type="PIRSF" id="PIRSF000379">
    <property type="entry name" value="For_Ac_trans_1"/>
    <property type="match status" value="1"/>
</dbReference>
<dbReference type="SUPFAM" id="SSF51998">
    <property type="entry name" value="PFL-like glycyl radical enzymes"/>
    <property type="match status" value="1"/>
</dbReference>
<dbReference type="PROSITE" id="PS00850">
    <property type="entry name" value="GLY_RADICAL_1"/>
    <property type="match status" value="1"/>
</dbReference>
<dbReference type="PROSITE" id="PS51149">
    <property type="entry name" value="GLY_RADICAL_2"/>
    <property type="match status" value="1"/>
</dbReference>
<dbReference type="PROSITE" id="PS51554">
    <property type="entry name" value="PFL"/>
    <property type="match status" value="1"/>
</dbReference>
<keyword id="KW-0012">Acyltransferase</keyword>
<keyword id="KW-0119">Carbohydrate metabolism</keyword>
<keyword id="KW-0963">Cytoplasm</keyword>
<keyword id="KW-0313">Glucose metabolism</keyword>
<keyword id="KW-0556">Organic radical</keyword>
<keyword id="KW-0808">Transferase</keyword>
<accession>Q7A7X6</accession>
<sequence>MLETNKNHATAWQGFKNGRWNRHVDVREFIQLNYTLYEGNDSFLAGPTEATSKLWEQVMQLSKEERERGGMWDMDTKVASTITSHDAGYLDKDLETIVGVQTEKPFKRSMQPFGGIRMAKAACEAYGYELDEETEKIFTDYRKTHNQGVFDAYSREMLNCRKAGVITGLPDAYGRGRIIGDYRRVALYGVDFLMEEKMHDFNTMSTEMSEDVIRLREELSEQYRALKELKELGQKYGFDLSRPAENFKEAVQWLYLAYLAAIKEQNGAAMSLGRTSTFLDIYAERDLKAGVITESEVQEIIDHFIMKLRIVKFARTPDYNELFSGDPTWVTESIGGVGIDGRPLVTKNSFRFLHSLDNLGPAPEPNLTVLWSVRLPDNFKTYCAKMSIKTSSIQYENDDIMRESYGDDYGIACCVSAMTIGKQMQFFGARANLAKTLLYAINGGKDEKSGAQVGPNFEGINSEVLEYDEVFKKFDQMMDWLAGVYINSLNVIHYMHDKYSYERIEMALHDTEIVRTMATGIAGLSVAADSLSAIKYAQVKPIRNEEGLVVDFEIEGDFPKYGNNDDRVDDIAVDLVERFMTKLRSHKTYRDSEHTMSVLTITSNVVYGKKTGNTPDGRKAGEPFAPGANPMHGRDQKGALSSLSSVAKIPYDCCKDGISNTFSIVPKSLGKEPEDQNRNLTSMLDGYAMQCGHHLNINVFNRETLIDAMEHPEEYPQLTIRVSGYAVNFIKLTREQQLDVISRTFHESM</sequence>
<feature type="chain" id="PRO_0000271724" description="Formate acetyltransferase">
    <location>
        <begin position="1"/>
        <end position="749"/>
    </location>
</feature>
<feature type="domain" description="PFL" evidence="4">
    <location>
        <begin position="3"/>
        <end position="619"/>
    </location>
</feature>
<feature type="domain" description="Glycine radical" evidence="3">
    <location>
        <begin position="626"/>
        <end position="749"/>
    </location>
</feature>
<feature type="active site" description="S-acetylcysteine intermediate" evidence="1">
    <location>
        <position position="413"/>
    </location>
</feature>
<feature type="active site" description="Cysteine radical intermediate" evidence="1">
    <location>
        <position position="414"/>
    </location>
</feature>
<feature type="modified residue" description="Glycine radical" evidence="3">
    <location>
        <position position="724"/>
    </location>
</feature>
<organism>
    <name type="scientific">Staphylococcus aureus (strain N315)</name>
    <dbReference type="NCBI Taxonomy" id="158879"/>
    <lineage>
        <taxon>Bacteria</taxon>
        <taxon>Bacillati</taxon>
        <taxon>Bacillota</taxon>
        <taxon>Bacilli</taxon>
        <taxon>Bacillales</taxon>
        <taxon>Staphylococcaceae</taxon>
        <taxon>Staphylococcus</taxon>
    </lineage>
</organism>
<gene>
    <name type="primary">pflB</name>
    <name type="ordered locus">SA0218</name>
</gene>
<name>PFLB_STAAN</name>
<protein>
    <recommendedName>
        <fullName>Formate acetyltransferase</fullName>
        <ecNumber evidence="1">2.3.1.54</ecNumber>
    </recommendedName>
    <alternativeName>
        <fullName>Pyruvate formate-lyase</fullName>
    </alternativeName>
</protein>
<reference key="1">
    <citation type="journal article" date="2001" name="Lancet">
        <title>Whole genome sequencing of meticillin-resistant Staphylococcus aureus.</title>
        <authorList>
            <person name="Kuroda M."/>
            <person name="Ohta T."/>
            <person name="Uchiyama I."/>
            <person name="Baba T."/>
            <person name="Yuzawa H."/>
            <person name="Kobayashi I."/>
            <person name="Cui L."/>
            <person name="Oguchi A."/>
            <person name="Aoki K."/>
            <person name="Nagai Y."/>
            <person name="Lian J.-Q."/>
            <person name="Ito T."/>
            <person name="Kanamori M."/>
            <person name="Matsumaru H."/>
            <person name="Maruyama A."/>
            <person name="Murakami H."/>
            <person name="Hosoyama A."/>
            <person name="Mizutani-Ui Y."/>
            <person name="Takahashi N.K."/>
            <person name="Sawano T."/>
            <person name="Inoue R."/>
            <person name="Kaito C."/>
            <person name="Sekimizu K."/>
            <person name="Hirakawa H."/>
            <person name="Kuhara S."/>
            <person name="Goto S."/>
            <person name="Yabuzaki J."/>
            <person name="Kanehisa M."/>
            <person name="Yamashita A."/>
            <person name="Oshima K."/>
            <person name="Furuya K."/>
            <person name="Yoshino C."/>
            <person name="Shiba T."/>
            <person name="Hattori M."/>
            <person name="Ogasawara N."/>
            <person name="Hayashi H."/>
            <person name="Hiramatsu K."/>
        </authorList>
    </citation>
    <scope>NUCLEOTIDE SEQUENCE [LARGE SCALE GENOMIC DNA]</scope>
    <source>
        <strain>N315</strain>
    </source>
</reference>
<reference key="2">
    <citation type="submission" date="2005-11" db="UniProtKB">
        <title>Shotgun proteomic analysis of total protein extract of S. aureus S30 versus N315.</title>
        <authorList>
            <person name="Stenz L."/>
        </authorList>
    </citation>
    <scope>IDENTIFICATION BY MASS SPECTROMETRY</scope>
</reference>
<reference key="3">
    <citation type="submission" date="2007-10" db="UniProtKB">
        <title>Shotgun proteomic analysis of total and membrane protein extracts of S. aureus strain N315.</title>
        <authorList>
            <person name="Vaezzadeh A.R."/>
            <person name="Deshusses J."/>
            <person name="Lescuyer P."/>
            <person name="Hochstrasser D.F."/>
        </authorList>
    </citation>
    <scope>IDENTIFICATION BY MASS SPECTROMETRY [LARGE SCALE ANALYSIS]</scope>
    <source>
        <strain>N315</strain>
    </source>
</reference>